<comment type="function">
    <text evidence="6 7">Possesses prevalent extracellular endopeptidase activity at low pH condition (PubMed:27977806, PubMed:34006103). Required for high-density growth in acidic environments (PubMed:27977806). Broad substrate specificity with preference cleavage of the peptide substrate between hydrophobic amino acids (PubMed:27977806, PubMed:34006103). Cleaves substrate at P1-P1' between Phe-Leu (PubMed:27977806, PubMed:34006103). Positively charged amino acids are preferred at P2 (PubMed:34006103). Prefers hydrophobic amino acids at the P3 and P4 positions (PubMed:34006103). Cleaves substrate also at P1'-P2' between Leu-Val to some degree (PubMed:34006103). Required for virulence in mouse inhalation model of infection (PubMed:27977806).</text>
</comment>
<comment type="activity regulation">
    <text evidence="6 7">Activated by low pH (PubMed:27977806). Inhibited by pepstatin A with an IC(50) of 1.4 nM (PubMed:27977806, PubMed:34006103). Inhibited by acetyl pepstatin (PubMed:34006103). Inhibited by HIV antiretroviral therapy protease inhibitors including amprenavir and ritonavir (PubMed:34006103). Inhibited by HIV-1 protease inhibitor brecanavir with an approximate IC(50) of 352 nM (PubMed:27977806, PubMed:34006103). Inhibited by HIV-1 protease inhibitors CGP53437 and GS-8374 (PubMed:34006103). From the tested peptidomimetic inhibitor molecules, macrocycles containing P2-P3' tethered side chains, statines in P1 and an alpha amino acid in P2' are the best (PubMed:27977806). From the linear peptidomimetic inhibitors, the ones with a phenylstatine or hydroxyethylamine scissile bond isoster are better than compounds with a reduced bond or a homo-amide (PubMed:27977806). Overall, inhibitors with a phenylalanine side chain, either unsubstituted or with a small substituent, is preferred in P1 while a bulkier P1 side chain leads to lower inhibition (PubMed:27977806).</text>
</comment>
<comment type="biophysicochemical properties">
    <kinetics>
        <KM evidence="6">19.64 uM for internally quenched fluorogenic substrate with amino acid sequence of 'GSPAFLA'</KM>
    </kinetics>
    <phDependence>
        <text evidence="6 7">Optimum pH is 3.5-4.5 (determined with 100 mM NaCl) (PubMed:27977806). Optimum pH is 5.0 (determined with 40 mM phosphate-borate-acetate Britton-Robinson buffer) (PubMed:34006103).</text>
    </phDependence>
</comment>
<comment type="subunit">
    <text evidence="7">Monomer.</text>
</comment>
<comment type="subcellular location">
    <subcellularLocation>
        <location evidence="6">Secreted</location>
    </subcellularLocation>
</comment>
<comment type="PTM">
    <text evidence="7">Activated by the autocatalytic cleavage of the propeptide. Cleaved at the end of the propeptide promiscuously from residue 76 to residue 79. C-terminal cleavage by autocatalysis at Gly-456 at the pH optimum indicating a possible regulatory or other function of this propeptide.</text>
</comment>
<comment type="disruption phenotype">
    <text evidence="6">Loss of endopeptidase activity in microbial minimal medium YNB (yeast nitrogen base) pH 5.0 as almost total loss of endopeptidase cleavage events of the substrate, but also a substantially decreased carboxypeptidase activity. Lower Cryptococcus cell density than wild-type at saturation when grown in YNB in acidic conditions. Growth defect at pH 3.5, but not at pH 5.0 or 6.5, after 48 hours. Cryptococcus cells are growth-defective in the lungs of the infected mouse host. Cells phagocytosed by host bone marrow-derived macrophages accumulate significantly more slowly within macrophages than the wild-type cells. Extended survival time of mice infected with Cryptococcus cells lacking this protein.</text>
</comment>
<comment type="similarity">
    <text evidence="4 12">Belongs to the peptidase A1 family.</text>
</comment>
<feature type="signal peptide" evidence="1 13">
    <location>
        <begin position="1"/>
        <end position="16"/>
    </location>
</feature>
<feature type="propeptide" id="PRO_0000461139" description="Removed in mature form; by autocatalysis" evidence="1 13">
    <location>
        <begin position="17"/>
        <end status="unknown"/>
    </location>
</feature>
<feature type="propeptide" id="PRO_0000461140" description="Removed at pH 5.0; by autocatalysis" evidence="13">
    <location>
        <begin position="456"/>
        <end position="489"/>
    </location>
</feature>
<feature type="chain" id="PRO_5003828859" description="Major aspartyl peptidase 1" evidence="1 13">
    <location>
        <begin status="unknown"/>
        <end position="489"/>
    </location>
</feature>
<feature type="domain" description="Peptidase A1" evidence="4">
    <location>
        <begin position="101"/>
        <end position="432"/>
    </location>
</feature>
<feature type="region of interest" description="Disordered" evidence="5">
    <location>
        <begin position="442"/>
        <end position="466"/>
    </location>
</feature>
<feature type="compositionally biased region" description="Gly residues" evidence="5">
    <location>
        <begin position="450"/>
        <end position="463"/>
    </location>
</feature>
<feature type="active site" evidence="2 4 13">
    <location>
        <position position="119"/>
    </location>
</feature>
<feature type="active site" evidence="2 4 13">
    <location>
        <position position="317"/>
    </location>
</feature>
<feature type="binding site" evidence="7 18">
    <location>
        <position position="121"/>
    </location>
    <ligand>
        <name>pepstatin A</name>
        <dbReference type="ChEBI" id="CHEBI:190525"/>
    </ligand>
</feature>
<feature type="binding site" evidence="7 18">
    <location>
        <position position="161"/>
    </location>
    <ligand>
        <name>pepstatin A</name>
        <dbReference type="ChEBI" id="CHEBI:190525"/>
    </ligand>
</feature>
<feature type="binding site" evidence="7 18">
    <location>
        <position position="163"/>
    </location>
    <ligand>
        <name>pepstatin A</name>
        <dbReference type="ChEBI" id="CHEBI:190525"/>
    </ligand>
</feature>
<feature type="binding site" evidence="7 18">
    <location>
        <position position="164"/>
    </location>
    <ligand>
        <name>pepstatin A</name>
        <dbReference type="ChEBI" id="CHEBI:190525"/>
    </ligand>
</feature>
<feature type="binding site" evidence="7 18">
    <location>
        <position position="286"/>
    </location>
    <ligand>
        <name>pepstatin A</name>
        <dbReference type="ChEBI" id="CHEBI:190525"/>
    </ligand>
</feature>
<feature type="binding site" evidence="7 18">
    <location>
        <position position="320"/>
    </location>
    <ligand>
        <name>pepstatin A</name>
        <dbReference type="ChEBI" id="CHEBI:190525"/>
    </ligand>
</feature>
<feature type="binding site" evidence="7 18">
    <location>
        <position position="321"/>
    </location>
    <ligand>
        <name>pepstatin A</name>
        <dbReference type="ChEBI" id="CHEBI:190525"/>
    </ligand>
</feature>
<feature type="glycosylation site" description="N-linked (GlcNAc...) asparagine" evidence="7 8 16 17 18">
    <location>
        <position position="266"/>
    </location>
</feature>
<feature type="disulfide bond" evidence="3 7 8 16 17 18">
    <location>
        <begin position="132"/>
        <end position="137"/>
    </location>
</feature>
<feature type="disulfide bond" evidence="4 7 8 16 17 18">
    <location>
        <begin position="357"/>
        <end position="391"/>
    </location>
</feature>
<feature type="strand" evidence="19">
    <location>
        <begin position="88"/>
        <end position="91"/>
    </location>
</feature>
<feature type="strand" evidence="19">
    <location>
        <begin position="93"/>
        <end position="95"/>
    </location>
</feature>
<feature type="turn" evidence="19">
    <location>
        <begin position="96"/>
        <end position="99"/>
    </location>
</feature>
<feature type="strand" evidence="19">
    <location>
        <begin position="100"/>
        <end position="107"/>
    </location>
</feature>
<feature type="turn" evidence="19">
    <location>
        <begin position="108"/>
        <end position="111"/>
    </location>
</feature>
<feature type="strand" evidence="19">
    <location>
        <begin position="112"/>
        <end position="119"/>
    </location>
</feature>
<feature type="strand" evidence="19">
    <location>
        <begin position="125"/>
        <end position="129"/>
    </location>
</feature>
<feature type="helix" evidence="19">
    <location>
        <begin position="135"/>
        <end position="138"/>
    </location>
</feature>
<feature type="helix" evidence="19">
    <location>
        <begin position="145"/>
        <end position="147"/>
    </location>
</feature>
<feature type="strand" evidence="19">
    <location>
        <begin position="152"/>
        <end position="162"/>
    </location>
</feature>
<feature type="strand" evidence="19">
    <location>
        <begin position="165"/>
        <end position="178"/>
    </location>
</feature>
<feature type="strand" evidence="19">
    <location>
        <begin position="181"/>
        <end position="195"/>
    </location>
</feature>
<feature type="strand" evidence="19">
    <location>
        <begin position="205"/>
        <end position="208"/>
    </location>
</feature>
<feature type="helix" evidence="19">
    <location>
        <begin position="212"/>
        <end position="214"/>
    </location>
</feature>
<feature type="helix" evidence="19">
    <location>
        <begin position="222"/>
        <end position="228"/>
    </location>
</feature>
<feature type="strand" evidence="19">
    <location>
        <begin position="232"/>
        <end position="241"/>
    </location>
</feature>
<feature type="strand" evidence="19">
    <location>
        <begin position="252"/>
        <end position="255"/>
    </location>
</feature>
<feature type="strand" evidence="19">
    <location>
        <begin position="258"/>
        <end position="262"/>
    </location>
</feature>
<feature type="turn" evidence="19">
    <location>
        <begin position="267"/>
        <end position="269"/>
    </location>
</feature>
<feature type="strand" evidence="19">
    <location>
        <begin position="270"/>
        <end position="278"/>
    </location>
</feature>
<feature type="helix" evidence="19">
    <location>
        <begin position="281"/>
        <end position="283"/>
    </location>
</feature>
<feature type="strand" evidence="19">
    <location>
        <begin position="285"/>
        <end position="290"/>
    </location>
</feature>
<feature type="strand" evidence="19">
    <location>
        <begin position="293"/>
        <end position="296"/>
    </location>
</feature>
<feature type="turn" evidence="19">
    <location>
        <begin position="306"/>
        <end position="308"/>
    </location>
</feature>
<feature type="strand" evidence="19">
    <location>
        <begin position="313"/>
        <end position="316"/>
    </location>
</feature>
<feature type="strand" evidence="19">
    <location>
        <begin position="321"/>
        <end position="325"/>
    </location>
</feature>
<feature type="helix" evidence="19">
    <location>
        <begin position="327"/>
        <end position="334"/>
    </location>
</feature>
<feature type="helix" evidence="19">
    <location>
        <begin position="345"/>
        <end position="347"/>
    </location>
</feature>
<feature type="strand" evidence="19">
    <location>
        <begin position="353"/>
        <end position="356"/>
    </location>
</feature>
<feature type="strand" evidence="19">
    <location>
        <begin position="363"/>
        <end position="367"/>
    </location>
</feature>
<feature type="strand" evidence="19">
    <location>
        <begin position="370"/>
        <end position="374"/>
    </location>
</feature>
<feature type="helix" evidence="19">
    <location>
        <begin position="376"/>
        <end position="379"/>
    </location>
</feature>
<feature type="strand" evidence="19">
    <location>
        <begin position="384"/>
        <end position="386"/>
    </location>
</feature>
<feature type="strand" evidence="19">
    <location>
        <begin position="390"/>
        <end position="397"/>
    </location>
</feature>
<feature type="strand" evidence="19">
    <location>
        <begin position="407"/>
        <end position="410"/>
    </location>
</feature>
<feature type="helix" evidence="19">
    <location>
        <begin position="412"/>
        <end position="415"/>
    </location>
</feature>
<feature type="strand" evidence="19">
    <location>
        <begin position="418"/>
        <end position="423"/>
    </location>
</feature>
<feature type="turn" evidence="19">
    <location>
        <begin position="424"/>
        <end position="427"/>
    </location>
</feature>
<feature type="strand" evidence="19">
    <location>
        <begin position="428"/>
        <end position="434"/>
    </location>
</feature>
<name>ASPR1_CRYNH</name>
<organism evidence="14 15">
    <name type="scientific">Cryptococcus neoformans var. grubii serotype A (strain H99 / ATCC 208821 / CBS 10515 / FGSC 9487)</name>
    <name type="common">Filobasidiella neoformans var. grubii</name>
    <dbReference type="NCBI Taxonomy" id="235443"/>
    <lineage>
        <taxon>Eukaryota</taxon>
        <taxon>Fungi</taxon>
        <taxon>Dikarya</taxon>
        <taxon>Basidiomycota</taxon>
        <taxon>Agaricomycotina</taxon>
        <taxon>Tremellomycetes</taxon>
        <taxon>Tremellales</taxon>
        <taxon>Cryptococcaceae</taxon>
        <taxon>Cryptococcus</taxon>
        <taxon>Cryptococcus neoformans species complex</taxon>
    </lineage>
</organism>
<keyword id="KW-0002">3D-structure</keyword>
<keyword id="KW-0064">Aspartyl protease</keyword>
<keyword id="KW-1015">Disulfide bond</keyword>
<keyword id="KW-0325">Glycoprotein</keyword>
<keyword id="KW-0378">Hydrolase</keyword>
<keyword id="KW-0645">Protease</keyword>
<keyword id="KW-0964">Secreted</keyword>
<keyword id="KW-0732">Signal</keyword>
<keyword id="KW-0843">Virulence</keyword>
<keyword id="KW-0865">Zymogen</keyword>
<evidence type="ECO:0000255" key="1"/>
<evidence type="ECO:0000255" key="2">
    <source>
        <dbReference type="PIRSR" id="PIRSR601461-1"/>
    </source>
</evidence>
<evidence type="ECO:0000255" key="3">
    <source>
        <dbReference type="PIRSR" id="PIRSR601461-2"/>
    </source>
</evidence>
<evidence type="ECO:0000255" key="4">
    <source>
        <dbReference type="PROSITE-ProRule" id="PRU01103"/>
    </source>
</evidence>
<evidence type="ECO:0000256" key="5">
    <source>
        <dbReference type="SAM" id="MobiDB-lite"/>
    </source>
</evidence>
<evidence type="ECO:0000269" key="6">
    <source>
    </source>
</evidence>
<evidence type="ECO:0000269" key="7">
    <source>
    </source>
</evidence>
<evidence type="ECO:0000269" key="8">
    <source ref="3"/>
</evidence>
<evidence type="ECO:0000303" key="9">
    <source>
    </source>
</evidence>
<evidence type="ECO:0000303" key="10">
    <source>
    </source>
</evidence>
<evidence type="ECO:0000303" key="11">
    <source ref="3"/>
</evidence>
<evidence type="ECO:0000305" key="12"/>
<evidence type="ECO:0000305" key="13">
    <source>
    </source>
</evidence>
<evidence type="ECO:0000312" key="14">
    <source>
        <dbReference type="EMBL" id="AFR96191.1"/>
    </source>
</evidence>
<evidence type="ECO:0000312" key="15">
    <source>
        <dbReference type="Proteomes" id="UP000010091"/>
    </source>
</evidence>
<evidence type="ECO:0007744" key="16">
    <source>
        <dbReference type="PDB" id="6R5H"/>
    </source>
</evidence>
<evidence type="ECO:0007744" key="17">
    <source>
        <dbReference type="PDB" id="6R61"/>
    </source>
</evidence>
<evidence type="ECO:0007744" key="18">
    <source>
        <dbReference type="PDB" id="6R6A"/>
    </source>
</evidence>
<evidence type="ECO:0007829" key="19">
    <source>
        <dbReference type="PDB" id="6R5H"/>
    </source>
</evidence>
<reference evidence="14 15" key="1">
    <citation type="journal article" date="2014" name="PLoS Genet.">
        <title>Analysis of the genome and transcriptome of Cryptococcus neoformans var. grubii reveals complex RNA expression and microevolution leading to virulence attenuation.</title>
        <authorList>
            <person name="Janbon G."/>
            <person name="Ormerod K.L."/>
            <person name="Paulet D."/>
            <person name="Byrnes E.J. III"/>
            <person name="Yadav V."/>
            <person name="Chatterjee G."/>
            <person name="Mullapudi N."/>
            <person name="Hon C.-C."/>
            <person name="Billmyre R.B."/>
            <person name="Brunel F."/>
            <person name="Bahn Y.-S."/>
            <person name="Chen W."/>
            <person name="Chen Y."/>
            <person name="Chow E.W.L."/>
            <person name="Coppee J.-Y."/>
            <person name="Floyd-Averette A."/>
            <person name="Gaillardin C."/>
            <person name="Gerik K.J."/>
            <person name="Goldberg J."/>
            <person name="Gonzalez-Hilarion S."/>
            <person name="Gujja S."/>
            <person name="Hamlin J.L."/>
            <person name="Hsueh Y.-P."/>
            <person name="Ianiri G."/>
            <person name="Jones S."/>
            <person name="Kodira C.D."/>
            <person name="Kozubowski L."/>
            <person name="Lam W."/>
            <person name="Marra M."/>
            <person name="Mesner L.D."/>
            <person name="Mieczkowski P.A."/>
            <person name="Moyrand F."/>
            <person name="Nielsen K."/>
            <person name="Proux C."/>
            <person name="Rossignol T."/>
            <person name="Schein J.E."/>
            <person name="Sun S."/>
            <person name="Wollschlaeger C."/>
            <person name="Wood I.A."/>
            <person name="Zeng Q."/>
            <person name="Neuveglise C."/>
            <person name="Newlon C.S."/>
            <person name="Perfect J.R."/>
            <person name="Lodge J.K."/>
            <person name="Idnurm A."/>
            <person name="Stajich J.E."/>
            <person name="Kronstad J.W."/>
            <person name="Sanyal K."/>
            <person name="Heitman J."/>
            <person name="Fraser J.A."/>
            <person name="Cuomo C.A."/>
            <person name="Dietrich F.S."/>
        </authorList>
    </citation>
    <scope>NUCLEOTIDE SEQUENCE [LARGE SCALE GENOMIC DNA]</scope>
    <source>
        <strain>H99 / ATCC 208821 / CBS 10515 / FGSC 9487</strain>
    </source>
</reference>
<reference key="2">
    <citation type="journal article" date="2016" name="PLoS Pathog.">
        <title>Integrated Activity and Genetic Profiling of Secreted Peptidases in Cryptococcus neoformans Reveals an Aspartyl Peptidase Required for Low pH Survival and Virulence.</title>
        <authorList>
            <person name="Clarke S.C."/>
            <person name="Dumesic P.A."/>
            <person name="Homer C.M."/>
            <person name="O'Donoghue A.J."/>
            <person name="La Greca F."/>
            <person name="Pallova L."/>
            <person name="Majer P."/>
            <person name="Madhani H.D."/>
            <person name="Craik C.S."/>
        </authorList>
    </citation>
    <scope>FUNCTION</scope>
    <scope>CATALYTIC ACTIVITY</scope>
    <scope>SUBSTRATE SPECIFICITY</scope>
    <scope>ACTIVITY REGULATION</scope>
    <scope>BIOPHYSICOCHEMICAL PROPERTIES</scope>
    <scope>SUBCELLULAR LOCATION</scope>
    <scope>DISRUPTION PHENOTYPE</scope>
    <source>
        <strain evidence="9">H99 / ATCC 208821 / CBS 10515 / FGSC 9487</strain>
    </source>
</reference>
<reference evidence="17" key="3">
    <citation type="submission" date="2019-03" db="PDB data bank">
        <title>Major aspartyl peptidase 1 from C. neoformans in complex with Inhibitor LP258.</title>
        <authorList>
            <person name="Krystufek R."/>
            <person name="Sacha P."/>
            <person name="Brynda J."/>
            <person name="Konvalinka J."/>
        </authorList>
    </citation>
    <scope>X-RAY CRYSTALLOGRAPHY (1.81 ANGSTROMS) OF 86-435 IN COMPLEX WITH INHIBITOR</scope>
    <scope>GLYCOSYLATION AT ASN-266</scope>
    <scope>DISULFIDE BONDS</scope>
</reference>
<reference evidence="16 18" key="4">
    <citation type="journal article" date="2021" name="J. Med. Chem.">
        <title>Re-emerging Aspartic Protease Targets: Examining &lt;i&gt;Cryptococcus neoformans&lt;/i&gt; Major Aspartyl Peptidase 1 as a Target for Antifungal Drug Discovery.</title>
        <authorList>
            <person name="Krystufek R."/>
            <person name="Sacha P."/>
            <person name="Starkova J."/>
            <person name="Brynda J."/>
            <person name="Hradilek M."/>
            <person name="Tloust'ova E."/>
            <person name="Grzymska J."/>
            <person name="Rut W."/>
            <person name="Boucher M.J."/>
            <person name="Drag M."/>
            <person name="Majer P."/>
            <person name="Hajek M."/>
            <person name="Rezacova P."/>
            <person name="Madhani H.D."/>
            <person name="Craik C.S."/>
            <person name="Konvalinka J."/>
        </authorList>
    </citation>
    <scope>X-RAY CRYSTALLOGRAPHY (1.75 ANGSTROMS) OF 86-435 AND IN COMPLEX WITH PEPSTATIN A</scope>
    <scope>FUNCTION</scope>
    <scope>CATALYTIC ACTIVITY</scope>
    <scope>SUBSTRATE SPECIFICITY</scope>
    <scope>ACTIVITY REGULATION</scope>
    <scope>BIOPHYSICOCHEMICAL PROPERTIES</scope>
    <scope>SUBUNIT</scope>
    <scope>PROTEOLYTIC CLEAVAGE</scope>
    <scope>ACTIVE SITES</scope>
    <scope>GLYCOSYLATION AT ASN-266</scope>
    <scope>DISULFIDE BONDS</scope>
    <source>
        <strain evidence="10">H99 / ATCC 208821 / CBS 10515 / FGSC 9487</strain>
    </source>
</reference>
<dbReference type="EC" id="3.4.23.-" evidence="6 7"/>
<dbReference type="EMBL" id="CP003826">
    <property type="protein sequence ID" value="AFR96191.1"/>
    <property type="molecule type" value="Genomic_DNA"/>
</dbReference>
<dbReference type="RefSeq" id="XP_012050594.1">
    <property type="nucleotide sequence ID" value="XM_012195204.1"/>
</dbReference>
<dbReference type="PDB" id="6R5H">
    <property type="method" value="X-ray"/>
    <property type="resolution" value="1.75 A"/>
    <property type="chains" value="A=86-435"/>
</dbReference>
<dbReference type="PDB" id="6R61">
    <property type="method" value="X-ray"/>
    <property type="resolution" value="1.81 A"/>
    <property type="chains" value="A=86-435"/>
</dbReference>
<dbReference type="PDB" id="6R6A">
    <property type="method" value="X-ray"/>
    <property type="resolution" value="1.80 A"/>
    <property type="chains" value="A=86-435"/>
</dbReference>
<dbReference type="PDBsum" id="6R5H"/>
<dbReference type="PDBsum" id="6R61"/>
<dbReference type="PDBsum" id="6R6A"/>
<dbReference type="SMR" id="J9VS02"/>
<dbReference type="MEROPS" id="A01.078"/>
<dbReference type="GeneID" id="23889157"/>
<dbReference type="KEGG" id="cng:CNAG_05872"/>
<dbReference type="VEuPathDB" id="FungiDB:CNAG_05872"/>
<dbReference type="HOGENOM" id="CLU_013253_1_2_1"/>
<dbReference type="OrthoDB" id="3824at5206"/>
<dbReference type="Proteomes" id="UP000010091">
    <property type="component" value="Chromosome 7"/>
</dbReference>
<dbReference type="GO" id="GO:0005576">
    <property type="term" value="C:extracellular region"/>
    <property type="evidence" value="ECO:0007669"/>
    <property type="project" value="UniProtKB-SubCell"/>
</dbReference>
<dbReference type="GO" id="GO:0004190">
    <property type="term" value="F:aspartic-type endopeptidase activity"/>
    <property type="evidence" value="ECO:0007669"/>
    <property type="project" value="UniProtKB-KW"/>
</dbReference>
<dbReference type="GO" id="GO:0006508">
    <property type="term" value="P:proteolysis"/>
    <property type="evidence" value="ECO:0007669"/>
    <property type="project" value="UniProtKB-KW"/>
</dbReference>
<dbReference type="CDD" id="cd05471">
    <property type="entry name" value="pepsin_like"/>
    <property type="match status" value="1"/>
</dbReference>
<dbReference type="FunFam" id="2.40.70.10:FF:000209">
    <property type="entry name" value="Endopeptidase"/>
    <property type="match status" value="1"/>
</dbReference>
<dbReference type="FunFam" id="2.40.70.10:FF:000067">
    <property type="entry name" value="Endopeptidase, putative"/>
    <property type="match status" value="1"/>
</dbReference>
<dbReference type="Gene3D" id="2.40.70.10">
    <property type="entry name" value="Acid Proteases"/>
    <property type="match status" value="2"/>
</dbReference>
<dbReference type="InterPro" id="IPR001461">
    <property type="entry name" value="Aspartic_peptidase_A1"/>
</dbReference>
<dbReference type="InterPro" id="IPR034164">
    <property type="entry name" value="Pepsin-like_dom"/>
</dbReference>
<dbReference type="InterPro" id="IPR033121">
    <property type="entry name" value="PEPTIDASE_A1"/>
</dbReference>
<dbReference type="InterPro" id="IPR021109">
    <property type="entry name" value="Peptidase_aspartic_dom_sf"/>
</dbReference>
<dbReference type="PANTHER" id="PTHR47966">
    <property type="entry name" value="BETA-SITE APP-CLEAVING ENZYME, ISOFORM A-RELATED"/>
    <property type="match status" value="1"/>
</dbReference>
<dbReference type="PANTHER" id="PTHR47966:SF6">
    <property type="entry name" value="PEPTIDASE A1 DOMAIN-CONTAINING PROTEIN"/>
    <property type="match status" value="1"/>
</dbReference>
<dbReference type="Pfam" id="PF00026">
    <property type="entry name" value="Asp"/>
    <property type="match status" value="1"/>
</dbReference>
<dbReference type="PRINTS" id="PR00792">
    <property type="entry name" value="PEPSIN"/>
</dbReference>
<dbReference type="SUPFAM" id="SSF50630">
    <property type="entry name" value="Acid proteases"/>
    <property type="match status" value="1"/>
</dbReference>
<dbReference type="PROSITE" id="PS51767">
    <property type="entry name" value="PEPTIDASE_A1"/>
    <property type="match status" value="1"/>
</dbReference>
<sequence>MHYLAVALPLLTLALAAPSNSVPLTPLNSRQYSEDLAERQSWLLDQAKGLRSKYAPHLGERGQELRRRDIIDEGITRRKRANQKRATGTVSLTDVGLDASYAGQVSIGTPAQDFLVIMDSGSSDLWVAGSTCTENFCKQTYTFDTSTSSSFITSSEAFNITYGSGDADGTLGTDTVSMAGFTVSDQTFGVVTSTSANLISYPLSGLMGLAWKSIASSGATPFWQTLAASGDWDSPEMGVYLKRYRGDNTASQIETDGGQILFGGLNTSLYNGSVNYISIDESEKDYWRIPLEAMVIQGNSVSIASSSGGSNPSCAIDTGTTLIGVPSQTANRIYSQIAGAEALSASSGYEGYYQYPCDTEVTVSLQFGGMSYSISNADMNLGSFTRDTSMCTGAFFAMDMSSRSPVQWIVGASFIKNVYTAFRYNPAAIGFAELVGGSSVSAGNPSSSTTGGGTSGSNGGGSSSGAMERKGVQLGWLVGAVAVGVAAMI</sequence>
<proteinExistence type="evidence at protein level"/>
<protein>
    <recommendedName>
        <fullName evidence="9 10 11">Major aspartyl peptidase 1</fullName>
        <ecNumber evidence="6 7">3.4.23.-</ecNumber>
    </recommendedName>
    <alternativeName>
        <fullName evidence="10">Aspartic protease</fullName>
    </alternativeName>
    <alternativeName>
        <fullName evidence="9">Aspartyl endopeptidase May1</fullName>
    </alternativeName>
    <alternativeName>
        <fullName evidence="14">Endopeptidase</fullName>
    </alternativeName>
</protein>
<accession>J9VS02</accession>
<gene>
    <name evidence="10" type="primary">cnap1</name>
    <name evidence="9" type="synonym">MAY1</name>
    <name evidence="9 10 14" type="ORF">CNAG_05872</name>
</gene>